<evidence type="ECO:0000255" key="1">
    <source>
        <dbReference type="HAMAP-Rule" id="MF_00322"/>
    </source>
</evidence>
<sequence length="622" mass="68876">MAAPIAEELAKKQQAISVAEFFEKNRQILGFDSAPRSLITTVKEAVDNSLDACEEAEILPDILLHIERVGKDNVSVIVEDNGPGIVKEQIPKVFAKLLYGSRFHALKQSRGQQGIGISASVLYAQLTAGHPTSVISKIGPDSPAHHYEVMINTSTNDPEILLDEVIDWDRPHGTRVELEMEASYVKGRRQSIYEYLKATAIVNPHARLTLIEPDGNEVIFDRATDKLPIPAKEILPHPHGIELGTLMKMLRYTDRQKLAPFLRYSFSKIGLLTAEEICKAAGLDTEMLPSKLTRDQTKKLLDAFKKVKIMAPPTDCLSPIGEELIYKGLEKEFNVDFIATTTRSPSVFSGNPFVVEVGIAYGGVLQKDDRIDIMRFANRVPLLYQQGGCATTHAVEGIKWKQYGLNQPGGGMPTGPVVLLVHVASTNVPFTSESKDAIADIPEIRDEVELAIKEVSRKLNRYLNRQVSLKKRREKEIIITKVLPKMAQKLADTLERDLPDINPVVAKVMGNLLVMRHVEHGANGDAAVTIKVKNFGSKLTEFKLHDMLPYEISDVSPEPKVISMGSDFDYVWTMKVSPEGSKAVTYSLSSMSEDEIKRLPQLIVEGLDEELVTGAKAIKGLI</sequence>
<feature type="chain" id="PRO_1000005871" description="Type 2 DNA topoisomerase 6 subunit B">
    <location>
        <begin position="1"/>
        <end position="622"/>
    </location>
</feature>
<feature type="binding site" evidence="1">
    <location>
        <position position="48"/>
    </location>
    <ligand>
        <name>ATP</name>
        <dbReference type="ChEBI" id="CHEBI:30616"/>
    </ligand>
</feature>
<feature type="binding site" evidence="1">
    <location>
        <position position="80"/>
    </location>
    <ligand>
        <name>ATP</name>
        <dbReference type="ChEBI" id="CHEBI:30616"/>
    </ligand>
</feature>
<feature type="binding site" evidence="1">
    <location>
        <begin position="101"/>
        <end position="102"/>
    </location>
    <ligand>
        <name>ATP</name>
        <dbReference type="ChEBI" id="CHEBI:30616"/>
    </ligand>
</feature>
<feature type="binding site" evidence="1">
    <location>
        <begin position="111"/>
        <end position="118"/>
    </location>
    <ligand>
        <name>ATP</name>
        <dbReference type="ChEBI" id="CHEBI:30616"/>
    </ligand>
</feature>
<feature type="binding site" evidence="1">
    <location>
        <position position="435"/>
    </location>
    <ligand>
        <name>ATP</name>
        <dbReference type="ChEBI" id="CHEBI:30616"/>
    </ligand>
</feature>
<keyword id="KW-0067">ATP-binding</keyword>
<keyword id="KW-0238">DNA-binding</keyword>
<keyword id="KW-0413">Isomerase</keyword>
<keyword id="KW-0547">Nucleotide-binding</keyword>
<keyword id="KW-0799">Topoisomerase</keyword>
<accession>Q12WQ0</accession>
<organism>
    <name type="scientific">Methanococcoides burtonii (strain DSM 6242 / NBRC 107633 / OCM 468 / ACE-M)</name>
    <dbReference type="NCBI Taxonomy" id="259564"/>
    <lineage>
        <taxon>Archaea</taxon>
        <taxon>Methanobacteriati</taxon>
        <taxon>Methanobacteriota</taxon>
        <taxon>Stenosarchaea group</taxon>
        <taxon>Methanomicrobia</taxon>
        <taxon>Methanosarcinales</taxon>
        <taxon>Methanosarcinaceae</taxon>
        <taxon>Methanococcoides</taxon>
    </lineage>
</organism>
<name>TOP6B_METBU</name>
<dbReference type="EC" id="5.6.2.2" evidence="1"/>
<dbReference type="EMBL" id="CP000300">
    <property type="protein sequence ID" value="ABE52126.1"/>
    <property type="molecule type" value="Genomic_DNA"/>
</dbReference>
<dbReference type="RefSeq" id="WP_011499272.1">
    <property type="nucleotide sequence ID" value="NC_007955.1"/>
</dbReference>
<dbReference type="SMR" id="Q12WQ0"/>
<dbReference type="STRING" id="259564.Mbur_1203"/>
<dbReference type="GeneID" id="3998359"/>
<dbReference type="KEGG" id="mbu:Mbur_1203"/>
<dbReference type="HOGENOM" id="CLU_006403_0_0_2"/>
<dbReference type="OrthoDB" id="65493at2157"/>
<dbReference type="Proteomes" id="UP000001979">
    <property type="component" value="Chromosome"/>
</dbReference>
<dbReference type="GO" id="GO:0005524">
    <property type="term" value="F:ATP binding"/>
    <property type="evidence" value="ECO:0007669"/>
    <property type="project" value="UniProtKB-UniRule"/>
</dbReference>
<dbReference type="GO" id="GO:0003677">
    <property type="term" value="F:DNA binding"/>
    <property type="evidence" value="ECO:0007669"/>
    <property type="project" value="UniProtKB-UniRule"/>
</dbReference>
<dbReference type="GO" id="GO:0003918">
    <property type="term" value="F:DNA topoisomerase type II (double strand cut, ATP-hydrolyzing) activity"/>
    <property type="evidence" value="ECO:0007669"/>
    <property type="project" value="UniProtKB-UniRule"/>
</dbReference>
<dbReference type="GO" id="GO:0006265">
    <property type="term" value="P:DNA topological change"/>
    <property type="evidence" value="ECO:0007669"/>
    <property type="project" value="UniProtKB-UniRule"/>
</dbReference>
<dbReference type="CDD" id="cd16933">
    <property type="entry name" value="HATPase_TopVIB-like"/>
    <property type="match status" value="1"/>
</dbReference>
<dbReference type="CDD" id="cd00823">
    <property type="entry name" value="TopoIIB_Trans"/>
    <property type="match status" value="1"/>
</dbReference>
<dbReference type="FunFam" id="3.30.230.10:FF:000089">
    <property type="entry name" value="Type 2 DNA topoisomerase 6 subunit B"/>
    <property type="match status" value="1"/>
</dbReference>
<dbReference type="FunFam" id="3.30.565.10:FF:000062">
    <property type="entry name" value="Type 2 DNA topoisomerase 6 subunit B"/>
    <property type="match status" value="1"/>
</dbReference>
<dbReference type="Gene3D" id="1.10.8.50">
    <property type="match status" value="1"/>
</dbReference>
<dbReference type="Gene3D" id="2.60.40.2960">
    <property type="match status" value="1"/>
</dbReference>
<dbReference type="Gene3D" id="3.30.230.10">
    <property type="match status" value="1"/>
</dbReference>
<dbReference type="Gene3D" id="6.10.20.80">
    <property type="match status" value="1"/>
</dbReference>
<dbReference type="Gene3D" id="3.30.565.10">
    <property type="entry name" value="Histidine kinase-like ATPase, C-terminal domain"/>
    <property type="match status" value="1"/>
</dbReference>
<dbReference type="HAMAP" id="MF_00322">
    <property type="entry name" value="Top6B"/>
    <property type="match status" value="1"/>
</dbReference>
<dbReference type="InterPro" id="IPR036890">
    <property type="entry name" value="HATPase_C_sf"/>
</dbReference>
<dbReference type="InterPro" id="IPR020568">
    <property type="entry name" value="Ribosomal_Su5_D2-typ_SF"/>
</dbReference>
<dbReference type="InterPro" id="IPR010979">
    <property type="entry name" value="Ribosomal_uS13-like_H2TH"/>
</dbReference>
<dbReference type="InterPro" id="IPR014721">
    <property type="entry name" value="Ribsml_uS5_D2-typ_fold_subgr"/>
</dbReference>
<dbReference type="InterPro" id="IPR040494">
    <property type="entry name" value="Top6b_C"/>
</dbReference>
<dbReference type="InterPro" id="IPR005734">
    <property type="entry name" value="TopoVI_B"/>
</dbReference>
<dbReference type="InterPro" id="IPR015320">
    <property type="entry name" value="TopoVI_B_transducer"/>
</dbReference>
<dbReference type="NCBIfam" id="NF003218">
    <property type="entry name" value="PRK04184.1"/>
    <property type="match status" value="1"/>
</dbReference>
<dbReference type="NCBIfam" id="TIGR01052">
    <property type="entry name" value="top6b"/>
    <property type="match status" value="1"/>
</dbReference>
<dbReference type="PANTHER" id="PTHR48444">
    <property type="entry name" value="DNA TOPOISOMERASE 6 SUBUNIT B"/>
    <property type="match status" value="1"/>
</dbReference>
<dbReference type="PANTHER" id="PTHR48444:SF1">
    <property type="entry name" value="DNA TOPOISOMERASE 6 SUBUNIT B"/>
    <property type="match status" value="1"/>
</dbReference>
<dbReference type="Pfam" id="PF02518">
    <property type="entry name" value="HATPase_c"/>
    <property type="match status" value="1"/>
</dbReference>
<dbReference type="Pfam" id="PF18000">
    <property type="entry name" value="Top6b_C"/>
    <property type="match status" value="1"/>
</dbReference>
<dbReference type="Pfam" id="PF09239">
    <property type="entry name" value="Topo-VIb_trans"/>
    <property type="match status" value="1"/>
</dbReference>
<dbReference type="PIRSF" id="PIRSF006553">
    <property type="entry name" value="TopoVI_B"/>
    <property type="match status" value="1"/>
</dbReference>
<dbReference type="SMART" id="SM00387">
    <property type="entry name" value="HATPase_c"/>
    <property type="match status" value="1"/>
</dbReference>
<dbReference type="SUPFAM" id="SSF55874">
    <property type="entry name" value="ATPase domain of HSP90 chaperone/DNA topoisomerase II/histidine kinase"/>
    <property type="match status" value="1"/>
</dbReference>
<dbReference type="SUPFAM" id="SSF54211">
    <property type="entry name" value="Ribosomal protein S5 domain 2-like"/>
    <property type="match status" value="1"/>
</dbReference>
<dbReference type="SUPFAM" id="SSF46946">
    <property type="entry name" value="S13-like H2TH domain"/>
    <property type="match status" value="1"/>
</dbReference>
<comment type="function">
    <text evidence="1">Relaxes both positive and negative superturns and exhibits a strong decatenase activity.</text>
</comment>
<comment type="catalytic activity">
    <reaction evidence="1">
        <text>ATP-dependent breakage, passage and rejoining of double-stranded DNA.</text>
        <dbReference type="EC" id="5.6.2.2"/>
    </reaction>
</comment>
<comment type="subunit">
    <text evidence="1">Homodimer. Heterotetramer of two Top6A and two Top6B chains.</text>
</comment>
<comment type="similarity">
    <text evidence="1">Belongs to the TOP6B family.</text>
</comment>
<reference key="1">
    <citation type="journal article" date="2009" name="ISME J.">
        <title>The genome sequence of the psychrophilic archaeon, Methanococcoides burtonii: the role of genome evolution in cold adaptation.</title>
        <authorList>
            <person name="Allen M.A."/>
            <person name="Lauro F.M."/>
            <person name="Williams T.J."/>
            <person name="Burg D."/>
            <person name="Siddiqui K.S."/>
            <person name="De Francisci D."/>
            <person name="Chong K.W."/>
            <person name="Pilak O."/>
            <person name="Chew H.H."/>
            <person name="De Maere M.Z."/>
            <person name="Ting L."/>
            <person name="Katrib M."/>
            <person name="Ng C."/>
            <person name="Sowers K.R."/>
            <person name="Galperin M.Y."/>
            <person name="Anderson I.J."/>
            <person name="Ivanova N."/>
            <person name="Dalin E."/>
            <person name="Martinez M."/>
            <person name="Lapidus A."/>
            <person name="Hauser L."/>
            <person name="Land M."/>
            <person name="Thomas T."/>
            <person name="Cavicchioli R."/>
        </authorList>
    </citation>
    <scope>NUCLEOTIDE SEQUENCE [LARGE SCALE GENOMIC DNA]</scope>
    <source>
        <strain>DSM 6242 / NBRC 107633 / OCM 468 / ACE-M</strain>
    </source>
</reference>
<proteinExistence type="inferred from homology"/>
<protein>
    <recommendedName>
        <fullName evidence="1">Type 2 DNA topoisomerase 6 subunit B</fullName>
        <ecNumber evidence="1">5.6.2.2</ecNumber>
    </recommendedName>
    <alternativeName>
        <fullName evidence="1">Type II DNA topoisomerase VI subunit B</fullName>
        <shortName evidence="1">TopoVI-B</shortName>
    </alternativeName>
</protein>
<gene>
    <name evidence="1" type="primary">top6B</name>
    <name type="ordered locus">Mbur_1203</name>
</gene>